<dbReference type="EC" id="2.7.4.9" evidence="1"/>
<dbReference type="EMBL" id="AE017143">
    <property type="protein sequence ID" value="AAP96654.1"/>
    <property type="molecule type" value="Genomic_DNA"/>
</dbReference>
<dbReference type="SMR" id="Q7VKH4"/>
<dbReference type="STRING" id="233412.HD_1933"/>
<dbReference type="KEGG" id="hdu:HD_1933"/>
<dbReference type="eggNOG" id="COG0125">
    <property type="taxonomic scope" value="Bacteria"/>
</dbReference>
<dbReference type="HOGENOM" id="CLU_049131_0_1_6"/>
<dbReference type="Proteomes" id="UP000001022">
    <property type="component" value="Chromosome"/>
</dbReference>
<dbReference type="GO" id="GO:0005829">
    <property type="term" value="C:cytosol"/>
    <property type="evidence" value="ECO:0007669"/>
    <property type="project" value="TreeGrafter"/>
</dbReference>
<dbReference type="GO" id="GO:0005524">
    <property type="term" value="F:ATP binding"/>
    <property type="evidence" value="ECO:0007669"/>
    <property type="project" value="UniProtKB-UniRule"/>
</dbReference>
<dbReference type="GO" id="GO:0004798">
    <property type="term" value="F:dTMP kinase activity"/>
    <property type="evidence" value="ECO:0007669"/>
    <property type="project" value="UniProtKB-UniRule"/>
</dbReference>
<dbReference type="GO" id="GO:0006233">
    <property type="term" value="P:dTDP biosynthetic process"/>
    <property type="evidence" value="ECO:0007669"/>
    <property type="project" value="InterPro"/>
</dbReference>
<dbReference type="GO" id="GO:0006235">
    <property type="term" value="P:dTTP biosynthetic process"/>
    <property type="evidence" value="ECO:0007669"/>
    <property type="project" value="UniProtKB-UniRule"/>
</dbReference>
<dbReference type="GO" id="GO:0006227">
    <property type="term" value="P:dUDP biosynthetic process"/>
    <property type="evidence" value="ECO:0007669"/>
    <property type="project" value="TreeGrafter"/>
</dbReference>
<dbReference type="CDD" id="cd01672">
    <property type="entry name" value="TMPK"/>
    <property type="match status" value="1"/>
</dbReference>
<dbReference type="FunFam" id="3.40.50.300:FF:000321">
    <property type="entry name" value="Thymidylate kinase"/>
    <property type="match status" value="1"/>
</dbReference>
<dbReference type="Gene3D" id="3.40.50.300">
    <property type="entry name" value="P-loop containing nucleotide triphosphate hydrolases"/>
    <property type="match status" value="1"/>
</dbReference>
<dbReference type="HAMAP" id="MF_00165">
    <property type="entry name" value="Thymidylate_kinase"/>
    <property type="match status" value="1"/>
</dbReference>
<dbReference type="InterPro" id="IPR027417">
    <property type="entry name" value="P-loop_NTPase"/>
</dbReference>
<dbReference type="InterPro" id="IPR039430">
    <property type="entry name" value="Thymidylate_kin-like_dom"/>
</dbReference>
<dbReference type="InterPro" id="IPR018095">
    <property type="entry name" value="Thymidylate_kin_CS"/>
</dbReference>
<dbReference type="InterPro" id="IPR018094">
    <property type="entry name" value="Thymidylate_kinase"/>
</dbReference>
<dbReference type="NCBIfam" id="TIGR00041">
    <property type="entry name" value="DTMP_kinase"/>
    <property type="match status" value="1"/>
</dbReference>
<dbReference type="PANTHER" id="PTHR10344">
    <property type="entry name" value="THYMIDYLATE KINASE"/>
    <property type="match status" value="1"/>
</dbReference>
<dbReference type="PANTHER" id="PTHR10344:SF4">
    <property type="entry name" value="UMP-CMP KINASE 2, MITOCHONDRIAL"/>
    <property type="match status" value="1"/>
</dbReference>
<dbReference type="Pfam" id="PF02223">
    <property type="entry name" value="Thymidylate_kin"/>
    <property type="match status" value="1"/>
</dbReference>
<dbReference type="SUPFAM" id="SSF52540">
    <property type="entry name" value="P-loop containing nucleoside triphosphate hydrolases"/>
    <property type="match status" value="1"/>
</dbReference>
<dbReference type="PROSITE" id="PS01331">
    <property type="entry name" value="THYMIDYLATE_KINASE"/>
    <property type="match status" value="1"/>
</dbReference>
<sequence length="214" mass="23899">MRTNNMRGKFIVLEGLEGAGKTTAHQIILTQLKQAGIQQIVQTREPGGTPLAEKLRYLIKHEFEEPISPQAELLMLYAARAQLVENVIKPALSAGKWVLGDRHDMSSQAYQGGGRQLDVALLNSLKESVLGPFEPDLTIYLDIDPAIGLARASGCGELDRIEQQSLDFFYRTRERYLALTQHNEKAVIINAEQPLEKVTNDIQQAVQKFLTFAQ</sequence>
<keyword id="KW-0067">ATP-binding</keyword>
<keyword id="KW-0418">Kinase</keyword>
<keyword id="KW-0545">Nucleotide biosynthesis</keyword>
<keyword id="KW-0547">Nucleotide-binding</keyword>
<keyword id="KW-1185">Reference proteome</keyword>
<keyword id="KW-0808">Transferase</keyword>
<evidence type="ECO:0000255" key="1">
    <source>
        <dbReference type="HAMAP-Rule" id="MF_00165"/>
    </source>
</evidence>
<accession>Q7VKH4</accession>
<comment type="function">
    <text evidence="1">Phosphorylation of dTMP to form dTDP in both de novo and salvage pathways of dTTP synthesis.</text>
</comment>
<comment type="catalytic activity">
    <reaction evidence="1">
        <text>dTMP + ATP = dTDP + ADP</text>
        <dbReference type="Rhea" id="RHEA:13517"/>
        <dbReference type="ChEBI" id="CHEBI:30616"/>
        <dbReference type="ChEBI" id="CHEBI:58369"/>
        <dbReference type="ChEBI" id="CHEBI:63528"/>
        <dbReference type="ChEBI" id="CHEBI:456216"/>
        <dbReference type="EC" id="2.7.4.9"/>
    </reaction>
</comment>
<comment type="similarity">
    <text evidence="1">Belongs to the thymidylate kinase family.</text>
</comment>
<organism>
    <name type="scientific">Haemophilus ducreyi (strain 35000HP / ATCC 700724)</name>
    <dbReference type="NCBI Taxonomy" id="233412"/>
    <lineage>
        <taxon>Bacteria</taxon>
        <taxon>Pseudomonadati</taxon>
        <taxon>Pseudomonadota</taxon>
        <taxon>Gammaproteobacteria</taxon>
        <taxon>Pasteurellales</taxon>
        <taxon>Pasteurellaceae</taxon>
        <taxon>Haemophilus</taxon>
    </lineage>
</organism>
<reference key="1">
    <citation type="submission" date="2003-06" db="EMBL/GenBank/DDBJ databases">
        <title>The complete genome sequence of Haemophilus ducreyi.</title>
        <authorList>
            <person name="Munson R.S. Jr."/>
            <person name="Ray W.C."/>
            <person name="Mahairas G."/>
            <person name="Sabo P."/>
            <person name="Mungur R."/>
            <person name="Johnson L."/>
            <person name="Nguyen D."/>
            <person name="Wang J."/>
            <person name="Forst C."/>
            <person name="Hood L."/>
        </authorList>
    </citation>
    <scope>NUCLEOTIDE SEQUENCE [LARGE SCALE GENOMIC DNA]</scope>
    <source>
        <strain>35000HP / ATCC 700724</strain>
    </source>
</reference>
<name>KTHY_HAEDU</name>
<proteinExistence type="inferred from homology"/>
<protein>
    <recommendedName>
        <fullName evidence="1">Thymidylate kinase</fullName>
        <ecNumber evidence="1">2.7.4.9</ecNumber>
    </recommendedName>
    <alternativeName>
        <fullName evidence="1">dTMP kinase</fullName>
    </alternativeName>
</protein>
<feature type="chain" id="PRO_0000155280" description="Thymidylate kinase">
    <location>
        <begin position="1"/>
        <end position="214"/>
    </location>
</feature>
<feature type="binding site" evidence="1">
    <location>
        <begin position="15"/>
        <end position="22"/>
    </location>
    <ligand>
        <name>ATP</name>
        <dbReference type="ChEBI" id="CHEBI:30616"/>
    </ligand>
</feature>
<gene>
    <name evidence="1" type="primary">tmk</name>
    <name type="ordered locus">HD_1933</name>
</gene>